<name>SECB_RICCN</name>
<dbReference type="EMBL" id="AE006914">
    <property type="protein sequence ID" value="AAL02638.1"/>
    <property type="molecule type" value="Genomic_DNA"/>
</dbReference>
<dbReference type="PIR" id="D97712">
    <property type="entry name" value="D97712"/>
</dbReference>
<dbReference type="RefSeq" id="WP_004996787.1">
    <property type="nucleotide sequence ID" value="NC_003103.1"/>
</dbReference>
<dbReference type="SMR" id="Q92JG7"/>
<dbReference type="GeneID" id="95361830"/>
<dbReference type="KEGG" id="rco:RC0100"/>
<dbReference type="HOGENOM" id="CLU_111574_0_0_5"/>
<dbReference type="Proteomes" id="UP000000816">
    <property type="component" value="Chromosome"/>
</dbReference>
<dbReference type="GO" id="GO:0005737">
    <property type="term" value="C:cytoplasm"/>
    <property type="evidence" value="ECO:0007669"/>
    <property type="project" value="UniProtKB-SubCell"/>
</dbReference>
<dbReference type="GO" id="GO:0051082">
    <property type="term" value="F:unfolded protein binding"/>
    <property type="evidence" value="ECO:0007669"/>
    <property type="project" value="InterPro"/>
</dbReference>
<dbReference type="GO" id="GO:0006457">
    <property type="term" value="P:protein folding"/>
    <property type="evidence" value="ECO:0007669"/>
    <property type="project" value="UniProtKB-UniRule"/>
</dbReference>
<dbReference type="GO" id="GO:0051262">
    <property type="term" value="P:protein tetramerization"/>
    <property type="evidence" value="ECO:0007669"/>
    <property type="project" value="InterPro"/>
</dbReference>
<dbReference type="GO" id="GO:0015031">
    <property type="term" value="P:protein transport"/>
    <property type="evidence" value="ECO:0007669"/>
    <property type="project" value="UniProtKB-UniRule"/>
</dbReference>
<dbReference type="CDD" id="cd00557">
    <property type="entry name" value="Translocase_SecB"/>
    <property type="match status" value="1"/>
</dbReference>
<dbReference type="Gene3D" id="3.10.420.10">
    <property type="entry name" value="SecB-like"/>
    <property type="match status" value="1"/>
</dbReference>
<dbReference type="HAMAP" id="MF_00821">
    <property type="entry name" value="SecB"/>
    <property type="match status" value="1"/>
</dbReference>
<dbReference type="InterPro" id="IPR003708">
    <property type="entry name" value="SecB"/>
</dbReference>
<dbReference type="InterPro" id="IPR035958">
    <property type="entry name" value="SecB-like_sf"/>
</dbReference>
<dbReference type="NCBIfam" id="NF004392">
    <property type="entry name" value="PRK05751.1-3"/>
    <property type="match status" value="1"/>
</dbReference>
<dbReference type="NCBIfam" id="TIGR00809">
    <property type="entry name" value="secB"/>
    <property type="match status" value="1"/>
</dbReference>
<dbReference type="PANTHER" id="PTHR36918">
    <property type="match status" value="1"/>
</dbReference>
<dbReference type="PANTHER" id="PTHR36918:SF1">
    <property type="entry name" value="PROTEIN-EXPORT PROTEIN SECB"/>
    <property type="match status" value="1"/>
</dbReference>
<dbReference type="Pfam" id="PF02556">
    <property type="entry name" value="SecB"/>
    <property type="match status" value="1"/>
</dbReference>
<dbReference type="PRINTS" id="PR01594">
    <property type="entry name" value="SECBCHAPRONE"/>
</dbReference>
<dbReference type="SUPFAM" id="SSF54611">
    <property type="entry name" value="SecB-like"/>
    <property type="match status" value="1"/>
</dbReference>
<comment type="function">
    <text evidence="1">One of the proteins required for the normal export of preproteins out of the cell cytoplasm. It is a molecular chaperone that binds to a subset of precursor proteins, maintaining them in a translocation-competent state. It also specifically binds to its receptor SecA.</text>
</comment>
<comment type="subunit">
    <text evidence="1">Homotetramer, a dimer of dimers. One homotetramer interacts with 1 SecA dimer.</text>
</comment>
<comment type="subcellular location">
    <subcellularLocation>
        <location evidence="1">Cytoplasm</location>
    </subcellularLocation>
</comment>
<comment type="similarity">
    <text evidence="1">Belongs to the SecB family.</text>
</comment>
<keyword id="KW-0143">Chaperone</keyword>
<keyword id="KW-0963">Cytoplasm</keyword>
<keyword id="KW-0653">Protein transport</keyword>
<keyword id="KW-0811">Translocation</keyword>
<keyword id="KW-0813">Transport</keyword>
<evidence type="ECO:0000255" key="1">
    <source>
        <dbReference type="HAMAP-Rule" id="MF_00821"/>
    </source>
</evidence>
<reference key="1">
    <citation type="journal article" date="2001" name="Science">
        <title>Mechanisms of evolution in Rickettsia conorii and R. prowazekii.</title>
        <authorList>
            <person name="Ogata H."/>
            <person name="Audic S."/>
            <person name="Renesto-Audiffren P."/>
            <person name="Fournier P.-E."/>
            <person name="Barbe V."/>
            <person name="Samson D."/>
            <person name="Roux V."/>
            <person name="Cossart P."/>
            <person name="Weissenbach J."/>
            <person name="Claverie J.-M."/>
            <person name="Raoult D."/>
        </authorList>
    </citation>
    <scope>NUCLEOTIDE SEQUENCE [LARGE SCALE GENOMIC DNA]</scope>
    <source>
        <strain>ATCC VR-613 / Malish 7</strain>
    </source>
</reference>
<accession>Q92JG7</accession>
<protein>
    <recommendedName>
        <fullName evidence="1">Protein-export protein SecB</fullName>
    </recommendedName>
</protein>
<feature type="chain" id="PRO_0000055408" description="Protein-export protein SecB">
    <location>
        <begin position="1"/>
        <end position="152"/>
    </location>
</feature>
<gene>
    <name evidence="1" type="primary">secB</name>
    <name type="ordered locus">RC0100</name>
</gene>
<organism>
    <name type="scientific">Rickettsia conorii (strain ATCC VR-613 / Malish 7)</name>
    <dbReference type="NCBI Taxonomy" id="272944"/>
    <lineage>
        <taxon>Bacteria</taxon>
        <taxon>Pseudomonadati</taxon>
        <taxon>Pseudomonadota</taxon>
        <taxon>Alphaproteobacteria</taxon>
        <taxon>Rickettsiales</taxon>
        <taxon>Rickettsiaceae</taxon>
        <taxon>Rickettsieae</taxon>
        <taxon>Rickettsia</taxon>
        <taxon>spotted fever group</taxon>
    </lineage>
</organism>
<proteinExistence type="inferred from homology"/>
<sequence length="152" mass="17182">MSTINTDTNETMPHISVNAQYIKDLSLENPSAPSSLAALDQRPQIDLSLDINITNLSEENFYEVELNIEAIARNEKYKLFQIELKYAGVFNLINIDSEQHPVLLSVHCPAMIFPFARKIIASCTQDAGFQPLMIDPIDFGALYHKKMSEHQN</sequence>